<name>APOC1_LYNPA</name>
<keyword id="KW-0445">Lipid transport</keyword>
<keyword id="KW-0964">Secreted</keyword>
<keyword id="KW-0732">Signal</keyword>
<keyword id="KW-0813">Transport</keyword>
<keyword id="KW-0850">VLDL</keyword>
<reference key="1">
    <citation type="submission" date="2016-02" db="EMBL/GenBank/DDBJ databases">
        <authorList>
            <person name="Alioto T."/>
            <person name="Alioto T."/>
        </authorList>
    </citation>
    <scope>NUCLEOTIDE SEQUENCE [LARGE SCALE GENOMIC DNA]</scope>
</reference>
<reference key="2">
    <citation type="unpublished observations" date="2018-05">
        <authorList>
            <person name="Puppione D.L."/>
        </authorList>
    </citation>
    <scope>IDENTIFICATION</scope>
</reference>
<feature type="signal peptide" evidence="4">
    <location>
        <begin position="1"/>
        <end position="26"/>
    </location>
</feature>
<feature type="chain" id="PRO_0000444586" description="Apolipoprotein C-I">
    <location>
        <begin position="27"/>
        <end position="78"/>
    </location>
</feature>
<feature type="chain" id="PRO_0000444587" description="Truncated apolipoprotein C-I" evidence="3">
    <location>
        <begin position="29"/>
        <end position="78"/>
    </location>
</feature>
<evidence type="ECO:0000250" key="1">
    <source>
        <dbReference type="UniProtKB" id="P02654"/>
    </source>
</evidence>
<evidence type="ECO:0000250" key="2">
    <source>
        <dbReference type="UniProtKB" id="P33047"/>
    </source>
</evidence>
<evidence type="ECO:0000250" key="3">
    <source>
        <dbReference type="UniProtKB" id="P86336"/>
    </source>
</evidence>
<evidence type="ECO:0000255" key="4"/>
<evidence type="ECO:0000305" key="5"/>
<organism>
    <name type="scientific">Lynx pardinus</name>
    <name type="common">Iberian lynx</name>
    <name type="synonym">Felis pardina</name>
    <dbReference type="NCBI Taxonomy" id="191816"/>
    <lineage>
        <taxon>Eukaryota</taxon>
        <taxon>Metazoa</taxon>
        <taxon>Chordata</taxon>
        <taxon>Craniata</taxon>
        <taxon>Vertebrata</taxon>
        <taxon>Euteleostomi</taxon>
        <taxon>Mammalia</taxon>
        <taxon>Eutheria</taxon>
        <taxon>Laurasiatheria</taxon>
        <taxon>Carnivora</taxon>
        <taxon>Feliformia</taxon>
        <taxon>Felidae</taxon>
        <taxon>Felinae</taxon>
        <taxon>Lynx</taxon>
    </lineage>
</organism>
<comment type="function">
    <text evidence="1 2">Inhibitor of lipoprotein binding to the low density lipoprotein (LDL) receptor, LDL receptor-related protein, and very low density lipoprotein (VLDL) receptor. Associates with high density lipoproteins (HDL) and the triacylglycerol-rich lipoproteins in the plasma and makes up about 10% of the protein of the VLDL and 2% of that of HDL. Appears to interfere directly with fatty acid uptake and is also the major plasma inhibitor of cholesteryl ester transfer protein (CETP). Binds free fatty acids and reduces their intracellular esterification. Modulates the interaction of APOE with beta-migrating VLDL and inhibits binding of beta-VLDL to the LDL receptor-related protein.</text>
</comment>
<comment type="subcellular location">
    <subcellularLocation>
        <location evidence="1">Secreted</location>
    </subcellularLocation>
</comment>
<comment type="similarity">
    <text evidence="5">Belongs to the apolipoprotein C1 family.</text>
</comment>
<gene>
    <name type="primary">APOC1</name>
</gene>
<accession>P0DPH1</accession>
<sequence length="78" mass="8636">MRLILWLPVLVVVLLMVLEGPAPAQGAPDIAGTFRNIPNSLKEFGNNLKDAFENIPEATRKLMTSFAEGLKNFRIPMV</sequence>
<proteinExistence type="inferred from homology"/>
<dbReference type="EMBL" id="FIZN01081397">
    <property type="status" value="NOT_ANNOTATED_CDS"/>
    <property type="molecule type" value="Genomic_DNA"/>
</dbReference>
<dbReference type="SMR" id="P0DPH1"/>
<dbReference type="GO" id="GO:0034364">
    <property type="term" value="C:high-density lipoprotein particle"/>
    <property type="evidence" value="ECO:0007669"/>
    <property type="project" value="TreeGrafter"/>
</dbReference>
<dbReference type="GO" id="GO:0034361">
    <property type="term" value="C:very-low-density lipoprotein particle"/>
    <property type="evidence" value="ECO:0007669"/>
    <property type="project" value="UniProtKB-KW"/>
</dbReference>
<dbReference type="GO" id="GO:0005504">
    <property type="term" value="F:fatty acid binding"/>
    <property type="evidence" value="ECO:0007669"/>
    <property type="project" value="TreeGrafter"/>
</dbReference>
<dbReference type="GO" id="GO:0004859">
    <property type="term" value="F:phospholipase inhibitor activity"/>
    <property type="evidence" value="ECO:0007669"/>
    <property type="project" value="TreeGrafter"/>
</dbReference>
<dbReference type="GO" id="GO:0006869">
    <property type="term" value="P:lipid transport"/>
    <property type="evidence" value="ECO:0007669"/>
    <property type="project" value="UniProtKB-KW"/>
</dbReference>
<dbReference type="GO" id="GO:0042157">
    <property type="term" value="P:lipoprotein metabolic process"/>
    <property type="evidence" value="ECO:0007669"/>
    <property type="project" value="InterPro"/>
</dbReference>
<dbReference type="GO" id="GO:0032375">
    <property type="term" value="P:negative regulation of cholesterol transport"/>
    <property type="evidence" value="ECO:0007669"/>
    <property type="project" value="TreeGrafter"/>
</dbReference>
<dbReference type="GO" id="GO:0050995">
    <property type="term" value="P:negative regulation of lipid catabolic process"/>
    <property type="evidence" value="ECO:0007669"/>
    <property type="project" value="TreeGrafter"/>
</dbReference>
<dbReference type="GO" id="GO:0010916">
    <property type="term" value="P:negative regulation of very-low-density lipoprotein particle clearance"/>
    <property type="evidence" value="ECO:0007669"/>
    <property type="project" value="TreeGrafter"/>
</dbReference>
<dbReference type="GO" id="GO:0006641">
    <property type="term" value="P:triglyceride metabolic process"/>
    <property type="evidence" value="ECO:0007669"/>
    <property type="project" value="TreeGrafter"/>
</dbReference>
<dbReference type="GO" id="GO:0034447">
    <property type="term" value="P:very-low-density lipoprotein particle clearance"/>
    <property type="evidence" value="ECO:0007669"/>
    <property type="project" value="TreeGrafter"/>
</dbReference>
<dbReference type="InterPro" id="IPR006781">
    <property type="entry name" value="ApoC-I"/>
</dbReference>
<dbReference type="PANTHER" id="PTHR16565">
    <property type="entry name" value="APOLIPOPROTEIN C-I"/>
    <property type="match status" value="1"/>
</dbReference>
<dbReference type="PANTHER" id="PTHR16565:SF2">
    <property type="entry name" value="APOLIPOPROTEIN C-I"/>
    <property type="match status" value="1"/>
</dbReference>
<protein>
    <recommendedName>
        <fullName>Apolipoprotein C-I</fullName>
        <shortName>Apo-CI</shortName>
        <shortName>ApoC-I</shortName>
    </recommendedName>
    <alternativeName>
        <fullName>Apolipoprotein C1</fullName>
    </alternativeName>
    <component>
        <recommendedName>
            <fullName>Truncated apolipoprotein C-I</fullName>
        </recommendedName>
    </component>
</protein>